<organism>
    <name type="scientific">Homo sapiens</name>
    <name type="common">Human</name>
    <dbReference type="NCBI Taxonomy" id="9606"/>
    <lineage>
        <taxon>Eukaryota</taxon>
        <taxon>Metazoa</taxon>
        <taxon>Chordata</taxon>
        <taxon>Craniata</taxon>
        <taxon>Vertebrata</taxon>
        <taxon>Euteleostomi</taxon>
        <taxon>Mammalia</taxon>
        <taxon>Eutheria</taxon>
        <taxon>Euarchontoglires</taxon>
        <taxon>Primates</taxon>
        <taxon>Haplorrhini</taxon>
        <taxon>Catarrhini</taxon>
        <taxon>Hominidae</taxon>
        <taxon>Homo</taxon>
    </lineage>
</organism>
<keyword id="KW-0002">3D-structure</keyword>
<keyword id="KW-0025">Alternative splicing</keyword>
<keyword id="KW-0053">Apoptosis</keyword>
<keyword id="KW-0217">Developmental protein</keyword>
<keyword id="KW-0221">Differentiation</keyword>
<keyword id="KW-0903">Direct protein sequencing</keyword>
<keyword id="KW-0225">Disease variant</keyword>
<keyword id="KW-1015">Disulfide bond</keyword>
<keyword id="KW-0038">Ectodermal dysplasia</keyword>
<keyword id="KW-0325">Glycoprotein</keyword>
<keyword id="KW-0472">Membrane</keyword>
<keyword id="KW-1267">Proteomics identification</keyword>
<keyword id="KW-0675">Receptor</keyword>
<keyword id="KW-1185">Reference proteome</keyword>
<keyword id="KW-0677">Repeat</keyword>
<keyword id="KW-0732">Signal</keyword>
<keyword id="KW-0812">Transmembrane</keyword>
<keyword id="KW-1133">Transmembrane helix</keyword>
<reference key="1">
    <citation type="journal article" date="1999" name="Nat. Genet.">
        <title>Mutations in the human homologue of mouse dl cause autosomal recessive and dominant hypohidrotic ectodermal dysplasia.</title>
        <authorList>
            <person name="Monreal A.W."/>
            <person name="Ferguson B.M."/>
            <person name="Headon D.J."/>
            <person name="Street S.L."/>
            <person name="Overbeek P.A."/>
            <person name="Zonana J."/>
        </authorList>
    </citation>
    <scope>NUCLEOTIDE SEQUENCE [GENOMIC DNA / MRNA] (ISOFORM 1)</scope>
    <scope>VARIANTS ECTD10B ARG-87 AND HIS-89</scope>
    <scope>VARIANT ECTD10A GLN-420</scope>
    <source>
        <tissue>Fetal heart</tissue>
        <tissue>Skin</tissue>
    </source>
</reference>
<reference key="2">
    <citation type="journal article" date="2004" name="Nat. Genet.">
        <title>Complete sequencing and characterization of 21,243 full-length human cDNAs.</title>
        <authorList>
            <person name="Ota T."/>
            <person name="Suzuki Y."/>
            <person name="Nishikawa T."/>
            <person name="Otsuki T."/>
            <person name="Sugiyama T."/>
            <person name="Irie R."/>
            <person name="Wakamatsu A."/>
            <person name="Hayashi K."/>
            <person name="Sato H."/>
            <person name="Nagai K."/>
            <person name="Kimura K."/>
            <person name="Makita H."/>
            <person name="Sekine M."/>
            <person name="Obayashi M."/>
            <person name="Nishi T."/>
            <person name="Shibahara T."/>
            <person name="Tanaka T."/>
            <person name="Ishii S."/>
            <person name="Yamamoto J."/>
            <person name="Saito K."/>
            <person name="Kawai Y."/>
            <person name="Isono Y."/>
            <person name="Nakamura Y."/>
            <person name="Nagahari K."/>
            <person name="Murakami K."/>
            <person name="Yasuda T."/>
            <person name="Iwayanagi T."/>
            <person name="Wagatsuma M."/>
            <person name="Shiratori A."/>
            <person name="Sudo H."/>
            <person name="Hosoiri T."/>
            <person name="Kaku Y."/>
            <person name="Kodaira H."/>
            <person name="Kondo H."/>
            <person name="Sugawara M."/>
            <person name="Takahashi M."/>
            <person name="Kanda K."/>
            <person name="Yokoi T."/>
            <person name="Furuya T."/>
            <person name="Kikkawa E."/>
            <person name="Omura Y."/>
            <person name="Abe K."/>
            <person name="Kamihara K."/>
            <person name="Katsuta N."/>
            <person name="Sato K."/>
            <person name="Tanikawa M."/>
            <person name="Yamazaki M."/>
            <person name="Ninomiya K."/>
            <person name="Ishibashi T."/>
            <person name="Yamashita H."/>
            <person name="Murakawa K."/>
            <person name="Fujimori K."/>
            <person name="Tanai H."/>
            <person name="Kimata M."/>
            <person name="Watanabe M."/>
            <person name="Hiraoka S."/>
            <person name="Chiba Y."/>
            <person name="Ishida S."/>
            <person name="Ono Y."/>
            <person name="Takiguchi S."/>
            <person name="Watanabe S."/>
            <person name="Yosida M."/>
            <person name="Hotuta T."/>
            <person name="Kusano J."/>
            <person name="Kanehori K."/>
            <person name="Takahashi-Fujii A."/>
            <person name="Hara H."/>
            <person name="Tanase T.-O."/>
            <person name="Nomura Y."/>
            <person name="Togiya S."/>
            <person name="Komai F."/>
            <person name="Hara R."/>
            <person name="Takeuchi K."/>
            <person name="Arita M."/>
            <person name="Imose N."/>
            <person name="Musashino K."/>
            <person name="Yuuki H."/>
            <person name="Oshima A."/>
            <person name="Sasaki N."/>
            <person name="Aotsuka S."/>
            <person name="Yoshikawa Y."/>
            <person name="Matsunawa H."/>
            <person name="Ichihara T."/>
            <person name="Shiohata N."/>
            <person name="Sano S."/>
            <person name="Moriya S."/>
            <person name="Momiyama H."/>
            <person name="Satoh N."/>
            <person name="Takami S."/>
            <person name="Terashima Y."/>
            <person name="Suzuki O."/>
            <person name="Nakagawa S."/>
            <person name="Senoh A."/>
            <person name="Mizoguchi H."/>
            <person name="Goto Y."/>
            <person name="Shimizu F."/>
            <person name="Wakebe H."/>
            <person name="Hishigaki H."/>
            <person name="Watanabe T."/>
            <person name="Sugiyama A."/>
            <person name="Takemoto M."/>
            <person name="Kawakami B."/>
            <person name="Yamazaki M."/>
            <person name="Watanabe K."/>
            <person name="Kumagai A."/>
            <person name="Itakura S."/>
            <person name="Fukuzumi Y."/>
            <person name="Fujimori Y."/>
            <person name="Komiyama M."/>
            <person name="Tashiro H."/>
            <person name="Tanigami A."/>
            <person name="Fujiwara T."/>
            <person name="Ono T."/>
            <person name="Yamada K."/>
            <person name="Fujii Y."/>
            <person name="Ozaki K."/>
            <person name="Hirao M."/>
            <person name="Ohmori Y."/>
            <person name="Kawabata A."/>
            <person name="Hikiji T."/>
            <person name="Kobatake N."/>
            <person name="Inagaki H."/>
            <person name="Ikema Y."/>
            <person name="Okamoto S."/>
            <person name="Okitani R."/>
            <person name="Kawakami T."/>
            <person name="Noguchi S."/>
            <person name="Itoh T."/>
            <person name="Shigeta K."/>
            <person name="Senba T."/>
            <person name="Matsumura K."/>
            <person name="Nakajima Y."/>
            <person name="Mizuno T."/>
            <person name="Morinaga M."/>
            <person name="Sasaki M."/>
            <person name="Togashi T."/>
            <person name="Oyama M."/>
            <person name="Hata H."/>
            <person name="Watanabe M."/>
            <person name="Komatsu T."/>
            <person name="Mizushima-Sugano J."/>
            <person name="Satoh T."/>
            <person name="Shirai Y."/>
            <person name="Takahashi Y."/>
            <person name="Nakagawa K."/>
            <person name="Okumura K."/>
            <person name="Nagase T."/>
            <person name="Nomura N."/>
            <person name="Kikuchi H."/>
            <person name="Masuho Y."/>
            <person name="Yamashita R."/>
            <person name="Nakai K."/>
            <person name="Yada T."/>
            <person name="Nakamura Y."/>
            <person name="Ohara O."/>
            <person name="Isogai T."/>
            <person name="Sugano S."/>
        </authorList>
    </citation>
    <scope>NUCLEOTIDE SEQUENCE [LARGE SCALE MRNA] (ISOFORMS 1 AND 2)</scope>
    <scope>VARIANT ALA-370</scope>
    <source>
        <tissue>Tongue</tissue>
    </source>
</reference>
<reference key="3">
    <citation type="journal article" date="2005" name="Nature">
        <title>Generation and annotation of the DNA sequences of human chromosomes 2 and 4.</title>
        <authorList>
            <person name="Hillier L.W."/>
            <person name="Graves T.A."/>
            <person name="Fulton R.S."/>
            <person name="Fulton L.A."/>
            <person name="Pepin K.H."/>
            <person name="Minx P."/>
            <person name="Wagner-McPherson C."/>
            <person name="Layman D."/>
            <person name="Wylie K."/>
            <person name="Sekhon M."/>
            <person name="Becker M.C."/>
            <person name="Fewell G.A."/>
            <person name="Delehaunty K.D."/>
            <person name="Miner T.L."/>
            <person name="Nash W.E."/>
            <person name="Kremitzki C."/>
            <person name="Oddy L."/>
            <person name="Du H."/>
            <person name="Sun H."/>
            <person name="Bradshaw-Cordum H."/>
            <person name="Ali J."/>
            <person name="Carter J."/>
            <person name="Cordes M."/>
            <person name="Harris A."/>
            <person name="Isak A."/>
            <person name="van Brunt A."/>
            <person name="Nguyen C."/>
            <person name="Du F."/>
            <person name="Courtney L."/>
            <person name="Kalicki J."/>
            <person name="Ozersky P."/>
            <person name="Abbott S."/>
            <person name="Armstrong J."/>
            <person name="Belter E.A."/>
            <person name="Caruso L."/>
            <person name="Cedroni M."/>
            <person name="Cotton M."/>
            <person name="Davidson T."/>
            <person name="Desai A."/>
            <person name="Elliott G."/>
            <person name="Erb T."/>
            <person name="Fronick C."/>
            <person name="Gaige T."/>
            <person name="Haakenson W."/>
            <person name="Haglund K."/>
            <person name="Holmes A."/>
            <person name="Harkins R."/>
            <person name="Kim K."/>
            <person name="Kruchowski S.S."/>
            <person name="Strong C.M."/>
            <person name="Grewal N."/>
            <person name="Goyea E."/>
            <person name="Hou S."/>
            <person name="Levy A."/>
            <person name="Martinka S."/>
            <person name="Mead K."/>
            <person name="McLellan M.D."/>
            <person name="Meyer R."/>
            <person name="Randall-Maher J."/>
            <person name="Tomlinson C."/>
            <person name="Dauphin-Kohlberg S."/>
            <person name="Kozlowicz-Reilly A."/>
            <person name="Shah N."/>
            <person name="Swearengen-Shahid S."/>
            <person name="Snider J."/>
            <person name="Strong J.T."/>
            <person name="Thompson J."/>
            <person name="Yoakum M."/>
            <person name="Leonard S."/>
            <person name="Pearman C."/>
            <person name="Trani L."/>
            <person name="Radionenko M."/>
            <person name="Waligorski J.E."/>
            <person name="Wang C."/>
            <person name="Rock S.M."/>
            <person name="Tin-Wollam A.-M."/>
            <person name="Maupin R."/>
            <person name="Latreille P."/>
            <person name="Wendl M.C."/>
            <person name="Yang S.-P."/>
            <person name="Pohl C."/>
            <person name="Wallis J.W."/>
            <person name="Spieth J."/>
            <person name="Bieri T.A."/>
            <person name="Berkowicz N."/>
            <person name="Nelson J.O."/>
            <person name="Osborne J."/>
            <person name="Ding L."/>
            <person name="Meyer R."/>
            <person name="Sabo A."/>
            <person name="Shotland Y."/>
            <person name="Sinha P."/>
            <person name="Wohldmann P.E."/>
            <person name="Cook L.L."/>
            <person name="Hickenbotham M.T."/>
            <person name="Eldred J."/>
            <person name="Williams D."/>
            <person name="Jones T.A."/>
            <person name="She X."/>
            <person name="Ciccarelli F.D."/>
            <person name="Izaurralde E."/>
            <person name="Taylor J."/>
            <person name="Schmutz J."/>
            <person name="Myers R.M."/>
            <person name="Cox D.R."/>
            <person name="Huang X."/>
            <person name="McPherson J.D."/>
            <person name="Mardis E.R."/>
            <person name="Clifton S.W."/>
            <person name="Warren W.C."/>
            <person name="Chinwalla A.T."/>
            <person name="Eddy S.R."/>
            <person name="Marra M.A."/>
            <person name="Ovcharenko I."/>
            <person name="Furey T.S."/>
            <person name="Miller W."/>
            <person name="Eichler E.E."/>
            <person name="Bork P."/>
            <person name="Suyama M."/>
            <person name="Torrents D."/>
            <person name="Waterston R.H."/>
            <person name="Wilson R.K."/>
        </authorList>
    </citation>
    <scope>NUCLEOTIDE SEQUENCE [LARGE SCALE GENOMIC DNA]</scope>
</reference>
<reference key="4">
    <citation type="submission" date="2005-09" db="EMBL/GenBank/DDBJ databases">
        <authorList>
            <person name="Mural R.J."/>
            <person name="Istrail S."/>
            <person name="Sutton G.G."/>
            <person name="Florea L."/>
            <person name="Halpern A.L."/>
            <person name="Mobarry C.M."/>
            <person name="Lippert R."/>
            <person name="Walenz B."/>
            <person name="Shatkay H."/>
            <person name="Dew I."/>
            <person name="Miller J.R."/>
            <person name="Flanigan M.J."/>
            <person name="Edwards N.J."/>
            <person name="Bolanos R."/>
            <person name="Fasulo D."/>
            <person name="Halldorsson B.V."/>
            <person name="Hannenhalli S."/>
            <person name="Turner R."/>
            <person name="Yooseph S."/>
            <person name="Lu F."/>
            <person name="Nusskern D.R."/>
            <person name="Shue B.C."/>
            <person name="Zheng X.H."/>
            <person name="Zhong F."/>
            <person name="Delcher A.L."/>
            <person name="Huson D.H."/>
            <person name="Kravitz S.A."/>
            <person name="Mouchard L."/>
            <person name="Reinert K."/>
            <person name="Remington K.A."/>
            <person name="Clark A.G."/>
            <person name="Waterman M.S."/>
            <person name="Eichler E.E."/>
            <person name="Adams M.D."/>
            <person name="Hunkapiller M.W."/>
            <person name="Myers E.W."/>
            <person name="Venter J.C."/>
        </authorList>
    </citation>
    <scope>NUCLEOTIDE SEQUENCE [LARGE SCALE GENOMIC DNA]</scope>
</reference>
<reference key="5">
    <citation type="journal article" date="2004" name="Genome Res.">
        <title>The status, quality, and expansion of the NIH full-length cDNA project: the Mammalian Gene Collection (MGC).</title>
        <authorList>
            <consortium name="The MGC Project Team"/>
        </authorList>
    </citation>
    <scope>NUCLEOTIDE SEQUENCE [LARGE SCALE MRNA] (ISOFORM 1)</scope>
    <source>
        <tissue>Liver</tissue>
    </source>
</reference>
<reference key="6">
    <citation type="journal article" date="2004" name="Protein Sci.">
        <title>Signal peptide prediction based on analysis of experimentally verified cleavage sites.</title>
        <authorList>
            <person name="Zhang Z."/>
            <person name="Henzel W.J."/>
        </authorList>
    </citation>
    <scope>PROTEIN SEQUENCE OF 27-41</scope>
</reference>
<reference key="7">
    <citation type="journal article" date="2000" name="Science">
        <title>Two-amino acid molecular switch in an epithelial morphogen that regulates binding to two distinct receptors.</title>
        <authorList>
            <person name="Yan M."/>
            <person name="Wang L.-C."/>
            <person name="Hymowitz S.G."/>
            <person name="Schilbach S."/>
            <person name="Lee J."/>
            <person name="Goddard A."/>
            <person name="de Vos A.M."/>
            <person name="Gao W.-Q."/>
            <person name="Dixit V.M."/>
        </authorList>
    </citation>
    <scope>INTERACTION WITH EDA ISOFORM A1</scope>
</reference>
<reference key="8">
    <citation type="journal article" date="2001" name="J. Biol. Chem.">
        <title>The ectodermal dysplasia receptor activates the nuclear factor-kappaB, JNK, and cell death pathways and binds to ectodysplasin A.</title>
        <authorList>
            <person name="Kumar A."/>
            <person name="Eby M.T."/>
            <person name="Sinha S."/>
            <person name="Jasmin A."/>
            <person name="Chaudhary P.M."/>
        </authorList>
    </citation>
    <scope>CHARACTERIZATION OF VARIANT GLN-420</scope>
    <scope>MUTAGENESIS OF GLU-379</scope>
    <scope>CHARACTERIZATION</scope>
    <scope>INTERACTION WITH TRAF1 AND TRAF3</scope>
</reference>
<reference key="9">
    <citation type="journal article" date="2004" name="J. Invest. Dermatol.">
        <title>A rare case of hypohidrotic ectodermal dysplasia caused by compound heterozygous mutations in the EDAR gene.</title>
        <authorList>
            <person name="Shimomura Y."/>
            <person name="Sato N."/>
            <person name="Miyashita A."/>
            <person name="Hashimoto T."/>
            <person name="Ito M."/>
            <person name="Kuwano R."/>
        </authorList>
    </citation>
    <scope>VARIANT ECTD10B HIS-375</scope>
    <scope>CHARACTERIZATION OF VARIANT ECTD10B HIS-375</scope>
</reference>
<reference key="10">
    <citation type="journal article" date="2005" name="Br. J. Dermatol.">
        <title>Novel mutations in the EDAR gene in two Pakistani consanguineous families with autosomal recessive hypohidrotic ectodermal dysplasia.</title>
        <authorList>
            <person name="Naeem M."/>
            <person name="Muhammad D."/>
            <person name="Ahmad W."/>
        </authorList>
    </citation>
    <scope>VARIANT ECTD10B SER-382</scope>
</reference>
<reference key="11">
    <citation type="journal article" date="2006" name="Hum. Mutat.">
        <title>Mutations in EDAR account for one-quarter of non-ED1-related hypohidrotic ectodermal dysplasia.</title>
        <authorList>
            <person name="Chassaing N."/>
            <person name="Bourthoumieu S."/>
            <person name="Cossee M."/>
            <person name="Calvas P."/>
            <person name="Vincent M.-C."/>
        </authorList>
    </citation>
    <scope>VARIANTS ECTD10B TYR-47; HIS-89; ALA-110; ARG-148; PHE-377; MET-403; PRO-413; THR-418; GLN-420 AND CYS-434</scope>
</reference>
<reference key="12">
    <citation type="journal article" date="2008" name="Eur. J. Hum. Genet.">
        <title>Mutation screening of the ectodysplasin-A receptor gene EDAR in hypohidrotic ectodermal dysplasia.</title>
        <authorList>
            <person name="van der Hout A.H."/>
            <person name="Oudesluijs G.G."/>
            <person name="Venema A."/>
            <person name="Verheij J.B.G.M."/>
            <person name="Mol B.G.J."/>
            <person name="Rump P."/>
            <person name="Brunner H.G."/>
            <person name="Vos Y.J."/>
            <person name="van Essen A.J."/>
        </authorList>
    </citation>
    <scope>VARIANTS ECTD10B HIS-89 AND ALA-110</scope>
    <scope>VARIANT ECTD10A GLN-420</scope>
</reference>
<reference key="13">
    <citation type="journal article" date="2008" name="Hum. Mol. Genet.">
        <title>A scan for genetic determinants of human hair morphology: EDAR is associated with Asian hair thickness.</title>
        <authorList>
            <person name="Fujimoto A."/>
            <person name="Kimura R."/>
            <person name="Ohashi J."/>
            <person name="Omi K."/>
            <person name="Yuliwulandari R."/>
            <person name="Batubara L."/>
            <person name="Mustofa M.S."/>
            <person name="Samakkarn U."/>
            <person name="Settheetham-Ishida W."/>
            <person name="Ishida T."/>
            <person name="Morishita Y."/>
            <person name="Furusawa T."/>
            <person name="Nakazawa M."/>
            <person name="Ohtsuka R."/>
            <person name="Tokunaga K."/>
        </authorList>
    </citation>
    <scope>VARIANT ALA-370</scope>
    <scope>CHARACTERIZATION OF VARIANT ALA-370</scope>
    <scope>ASSOCIATION WITH HAIR MORPHOLOGY TYPE 1</scope>
</reference>
<reference key="14">
    <citation type="journal article" date="2008" name="Hum. Mutat.">
        <title>Enhanced ectodysplasin-A receptor (EDAR) signaling alters multiple fiber characteristics to produce the East Asian hair form.</title>
        <authorList>
            <person name="Mou C."/>
            <person name="Thomason H.A."/>
            <person name="Willan P.M."/>
            <person name="Clowes C."/>
            <person name="Harris W.E."/>
            <person name="Drew C.F."/>
            <person name="Dixon J."/>
            <person name="Dixon M.J."/>
            <person name="Headon D.J."/>
        </authorList>
    </citation>
    <scope>CHARACTERIZATION OF VARIANT ALA-370</scope>
</reference>
<reference key="15">
    <citation type="journal article" date="2009" name="Clin. Genet.">
        <title>Identification of mutations in the EDA and EDAR genes in Pakistani families with hypohidrotic ectodermal dysplasia.</title>
        <authorList>
            <person name="Shimomura Y."/>
            <person name="Wajid M."/>
            <person name="Weiser J."/>
            <person name="Kraemer L."/>
            <person name="Ishii Y."/>
            <person name="Lombillo V."/>
            <person name="Bale S.J."/>
            <person name="Christiano A.M."/>
        </authorList>
    </citation>
    <scope>VARIANTS ECTD10B GLN-98; GLN-358 AND ARG-434</scope>
</reference>
<reference key="16">
    <citation type="journal article" date="2011" name="Hum. Mutat.">
        <title>Only four genes (EDA1, EDAR, EDARADD, and WNT10A) account for 90% of hypohidrotic/anhidrotic ectodermal dysplasia cases.</title>
        <authorList>
            <person name="Cluzeau C."/>
            <person name="Hadj-Rabia S."/>
            <person name="Jambou M."/>
            <person name="Mansour S."/>
            <person name="Guigue P."/>
            <person name="Masmoudi S."/>
            <person name="Bal E."/>
            <person name="Chassaing N."/>
            <person name="Vincent M.C."/>
            <person name="Viot G."/>
            <person name="Clauss F."/>
            <person name="Maniere M.C."/>
            <person name="Toupenay S."/>
            <person name="Le Merrer M."/>
            <person name="Lyonnet S."/>
            <person name="Cormier-Daire V."/>
            <person name="Amiel J."/>
            <person name="Faivre L."/>
            <person name="de Prost Y."/>
            <person name="Munnich A."/>
            <person name="Bonnefont J.P."/>
            <person name="Bodemer C."/>
            <person name="Smahi A."/>
        </authorList>
    </citation>
    <scope>VARIANTS ECTD10B HIS-89; GLN-358; GLN-396 INS; MET-403; PHE-408 AND GLN-420</scope>
</reference>
<reference key="17">
    <citation type="journal article" date="2016" name="Genes (Basel)">
        <title>Eight mutations of three genes (EDA, EDAR, and WNT10A) identified in seven hypohidrotic ectodermal dysplasia patients.</title>
        <authorList>
            <person name="Zeng B."/>
            <person name="Xiao X."/>
            <person name="Li S."/>
            <person name="Lu H."/>
            <person name="Lu J."/>
            <person name="Zhu L."/>
            <person name="Yu D."/>
            <person name="Zhao W."/>
        </authorList>
    </citation>
    <scope>VARIANT ECTD10B GLN-420</scope>
    <scope>VARIANT LEU-370</scope>
</reference>
<gene>
    <name type="primary">EDAR</name>
    <name type="synonym">DL</name>
</gene>
<feature type="signal peptide" evidence="7">
    <location>
        <begin position="1"/>
        <end position="26"/>
    </location>
</feature>
<feature type="chain" id="PRO_0000034608" description="Tumor necrosis factor receptor superfamily member EDAR">
    <location>
        <begin position="27"/>
        <end position="448"/>
    </location>
</feature>
<feature type="topological domain" description="Extracellular" evidence="2">
    <location>
        <begin position="27"/>
        <end position="187"/>
    </location>
</feature>
<feature type="transmembrane region" description="Helical" evidence="2">
    <location>
        <begin position="188"/>
        <end position="208"/>
    </location>
</feature>
<feature type="topological domain" description="Cytoplasmic" evidence="2">
    <location>
        <begin position="209"/>
        <end position="448"/>
    </location>
</feature>
<feature type="repeat" description="TNFR-Cys 1">
    <location>
        <begin position="30"/>
        <end position="71"/>
    </location>
</feature>
<feature type="repeat" description="TNFR-Cys 2">
    <location>
        <begin position="73"/>
        <end position="113"/>
    </location>
</feature>
<feature type="repeat" description="TNFR-Cys 3">
    <location>
        <begin position="115"/>
        <end position="148"/>
    </location>
</feature>
<feature type="domain" description="Death">
    <location>
        <begin position="358"/>
        <end position="431"/>
    </location>
</feature>
<feature type="region of interest" description="Disordered" evidence="3">
    <location>
        <begin position="220"/>
        <end position="297"/>
    </location>
</feature>
<feature type="compositionally biased region" description="Basic and acidic residues" evidence="3">
    <location>
        <begin position="233"/>
        <end position="243"/>
    </location>
</feature>
<feature type="compositionally biased region" description="Polar residues" evidence="3">
    <location>
        <begin position="271"/>
        <end position="283"/>
    </location>
</feature>
<feature type="glycosylation site" description="N-linked (GlcNAc...) asparagine" evidence="2">
    <location>
        <position position="38"/>
    </location>
</feature>
<feature type="disulfide bond" evidence="1">
    <location>
        <begin position="31"/>
        <end position="44"/>
    </location>
</feature>
<feature type="disulfide bond" evidence="1">
    <location>
        <begin position="47"/>
        <end position="60"/>
    </location>
</feature>
<feature type="disulfide bond" evidence="1">
    <location>
        <begin position="50"/>
        <end position="71"/>
    </location>
</feature>
<feature type="disulfide bond" evidence="1">
    <location>
        <begin position="74"/>
        <end position="87"/>
    </location>
</feature>
<feature type="disulfide bond" evidence="1">
    <location>
        <begin position="93"/>
        <end position="113"/>
    </location>
</feature>
<feature type="disulfide bond" evidence="1">
    <location>
        <begin position="135"/>
        <end position="148"/>
    </location>
</feature>
<feature type="splice variant" id="VSP_054187" description="In isoform 2." evidence="17">
    <original>A</original>
    <variation>GDGPHAPVPCFLDSPSTPPVGEPGCSLPPLSPA</variation>
    <location>
        <position position="219"/>
    </location>
</feature>
<feature type="sequence variant" id="VAR_054444" description="In ECTD10B; dbSNP:rs778903951." evidence="10">
    <original>C</original>
    <variation>Y</variation>
    <location>
        <position position="47"/>
    </location>
</feature>
<feature type="sequence variant" id="VAR_013448" description="In ECTD10B; dbSNP:rs121908451." evidence="4">
    <original>C</original>
    <variation>R</variation>
    <location>
        <position position="87"/>
    </location>
</feature>
<feature type="sequence variant" id="VAR_013449" description="In ECTD10B; dbSNP:rs121908450." evidence="4 10 12 15">
    <original>R</original>
    <variation>H</variation>
    <location>
        <position position="89"/>
    </location>
</feature>
<feature type="sequence variant" id="VAR_064830" description="In ECTD10B; dbSNP:rs144473052." evidence="14">
    <original>R</original>
    <variation>Q</variation>
    <location>
        <position position="98"/>
    </location>
</feature>
<feature type="sequence variant" id="VAR_054445" description="In ECTD10B; dbSNP:rs121908455." evidence="10 12">
    <original>D</original>
    <variation>A</variation>
    <location>
        <position position="110"/>
    </location>
</feature>
<feature type="sequence variant" id="VAR_054446" description="In ECTD10B; dbSNP:rs1181378221." evidence="10">
    <original>C</original>
    <variation>R</variation>
    <location>
        <position position="148"/>
    </location>
</feature>
<feature type="sequence variant" id="VAR_064831" description="In ECTD10B; dbSNP:rs886039564." evidence="14 15">
    <original>R</original>
    <variation>Q</variation>
    <location>
        <position position="358"/>
    </location>
</feature>
<feature type="sequence variant" id="VAR_020011" description="Associated with increase in hair thickness; results in decreased downstream activity of NFKB1 48 hours after transfection into cells; dbSNP:rs3827760." evidence="6 11 13">
    <original>V</original>
    <variation>A</variation>
    <location>
        <position position="370"/>
    </location>
</feature>
<feature type="sequence variant" id="VAR_077562" description="In dbSNP:rs1267372612." evidence="16">
    <original>V</original>
    <variation>L</variation>
    <location>
        <position position="370"/>
    </location>
</feature>
<feature type="sequence variant" id="VAR_054447" description="In ECTD10B; the mutant protein does not interact with EDARADD and is functionally inactive; dbSNP:rs121908454." evidence="8">
    <original>R</original>
    <variation>H</variation>
    <location>
        <position position="375"/>
    </location>
</feature>
<feature type="sequence variant" id="VAR_054448" description="In ECTD10B." evidence="10">
    <original>L</original>
    <variation>F</variation>
    <location>
        <position position="377"/>
    </location>
</feature>
<feature type="sequence variant" id="VAR_054449" description="In ECTD10B; dbSNP:rs747806672." evidence="9">
    <original>G</original>
    <variation>S</variation>
    <location>
        <position position="382"/>
    </location>
</feature>
<feature type="sequence variant" id="VAR_064832" description="In ECTD10B." evidence="15">
    <original>Q</original>
    <variation>QQ</variation>
    <location>
        <position position="396"/>
    </location>
</feature>
<feature type="sequence variant" id="VAR_054450" description="In ECTD10B; dbSNP:rs1696610832." evidence="10 15">
    <original>T</original>
    <variation>M</variation>
    <location>
        <position position="403"/>
    </location>
</feature>
<feature type="sequence variant" id="VAR_064833" description="In ECTD10B." evidence="15">
    <original>I</original>
    <variation>F</variation>
    <location>
        <position position="408"/>
    </location>
</feature>
<feature type="sequence variant" id="VAR_054451" description="In ECTD10B." evidence="10">
    <original>T</original>
    <variation>P</variation>
    <location>
        <position position="413"/>
    </location>
</feature>
<feature type="sequence variant" id="VAR_054452" description="In ECTD10B; dbSNP:rs1696609870." evidence="10">
    <original>I</original>
    <variation>T</variation>
    <location>
        <position position="418"/>
    </location>
</feature>
<feature type="sequence variant" id="VAR_013450" description="In ECTD10A and ECTD10B; abolishes NF-kappa-B activation and reduces JNK activation; dbSNP:rs121908453." evidence="4 5 10 12 15 16">
    <original>R</original>
    <variation>Q</variation>
    <location>
        <position position="420"/>
    </location>
</feature>
<feature type="sequence variant" id="VAR_054453" description="In ECTD10B; dbSNP:rs528478080." evidence="10">
    <original>W</original>
    <variation>C</variation>
    <location>
        <position position="434"/>
    </location>
</feature>
<feature type="sequence variant" id="VAR_064834" description="In ECTD10B; dbSNP:rs773885029." evidence="14">
    <original>W</original>
    <variation>R</variation>
    <location>
        <position position="434"/>
    </location>
</feature>
<feature type="mutagenesis site" description="Reduces activation of NF-kappa-B." evidence="5">
    <original>E</original>
    <variation>K</variation>
    <location>
        <position position="379"/>
    </location>
</feature>
<feature type="sequence conflict" description="In Ref. 2; BAG36519." evidence="18" ref="2">
    <original>S</original>
    <variation>P</variation>
    <location>
        <position position="156"/>
    </location>
</feature>
<feature type="sequence conflict" description="In Ref. 1; AAD50077." evidence="18" ref="1">
    <original>P</original>
    <variation>S</variation>
    <location>
        <position position="262"/>
    </location>
</feature>
<feature type="strand" evidence="19">
    <location>
        <begin position="54"/>
        <end position="57"/>
    </location>
</feature>
<feature type="strand" evidence="19">
    <location>
        <begin position="70"/>
        <end position="73"/>
    </location>
</feature>
<feature type="helix" evidence="19">
    <location>
        <begin position="93"/>
        <end position="96"/>
    </location>
</feature>
<feature type="strand" evidence="19">
    <location>
        <begin position="100"/>
        <end position="102"/>
    </location>
</feature>
<feature type="strand" evidence="19">
    <location>
        <begin position="106"/>
        <end position="108"/>
    </location>
</feature>
<feature type="strand" evidence="19">
    <location>
        <begin position="132"/>
        <end position="134"/>
    </location>
</feature>
<feature type="sequence conflict" description="In Ref. 2; BAG59487." evidence="18" ref="2">
    <original>F</original>
    <variation>L</variation>
    <location sequence="Q9UNE0-2">
        <position position="229"/>
    </location>
</feature>
<proteinExistence type="evidence at protein level"/>
<dbReference type="EMBL" id="AF130988">
    <property type="protein sequence ID" value="AAD50076.1"/>
    <property type="molecule type" value="mRNA"/>
</dbReference>
<dbReference type="EMBL" id="AF130996">
    <property type="protein sequence ID" value="AAD50077.1"/>
    <property type="molecule type" value="Genomic_DNA"/>
</dbReference>
<dbReference type="EMBL" id="AF130990">
    <property type="protein sequence ID" value="AAD50077.1"/>
    <property type="status" value="JOINED"/>
    <property type="molecule type" value="Genomic_DNA"/>
</dbReference>
<dbReference type="EMBL" id="AF130991">
    <property type="protein sequence ID" value="AAD50077.1"/>
    <property type="status" value="JOINED"/>
    <property type="molecule type" value="Genomic_DNA"/>
</dbReference>
<dbReference type="EMBL" id="AF130992">
    <property type="protein sequence ID" value="AAD50077.1"/>
    <property type="status" value="JOINED"/>
    <property type="molecule type" value="Genomic_DNA"/>
</dbReference>
<dbReference type="EMBL" id="AF130993">
    <property type="protein sequence ID" value="AAD50077.1"/>
    <property type="status" value="JOINED"/>
    <property type="molecule type" value="Genomic_DNA"/>
</dbReference>
<dbReference type="EMBL" id="AF130994">
    <property type="protein sequence ID" value="AAD50077.1"/>
    <property type="status" value="JOINED"/>
    <property type="molecule type" value="Genomic_DNA"/>
</dbReference>
<dbReference type="EMBL" id="AF130995">
    <property type="protein sequence ID" value="AAD50077.1"/>
    <property type="status" value="JOINED"/>
    <property type="molecule type" value="Genomic_DNA"/>
</dbReference>
<dbReference type="EMBL" id="AK296936">
    <property type="protein sequence ID" value="BAG59487.1"/>
    <property type="molecule type" value="mRNA"/>
</dbReference>
<dbReference type="EMBL" id="AK313781">
    <property type="protein sequence ID" value="BAG36519.1"/>
    <property type="molecule type" value="mRNA"/>
</dbReference>
<dbReference type="EMBL" id="AC073415">
    <property type="status" value="NOT_ANNOTATED_CDS"/>
    <property type="molecule type" value="Genomic_DNA"/>
</dbReference>
<dbReference type="EMBL" id="AC092160">
    <property type="status" value="NOT_ANNOTATED_CDS"/>
    <property type="molecule type" value="Genomic_DNA"/>
</dbReference>
<dbReference type="EMBL" id="AC133784">
    <property type="status" value="NOT_ANNOTATED_CDS"/>
    <property type="molecule type" value="Genomic_DNA"/>
</dbReference>
<dbReference type="EMBL" id="CH471182">
    <property type="protein sequence ID" value="EAW53869.1"/>
    <property type="molecule type" value="Genomic_DNA"/>
</dbReference>
<dbReference type="EMBL" id="BC093870">
    <property type="protein sequence ID" value="AAH93870.1"/>
    <property type="molecule type" value="mRNA"/>
</dbReference>
<dbReference type="EMBL" id="BC093872">
    <property type="protein sequence ID" value="AAH93872.1"/>
    <property type="molecule type" value="mRNA"/>
</dbReference>
<dbReference type="CCDS" id="CCDS2081.1">
    <molecule id="Q9UNE0-1"/>
</dbReference>
<dbReference type="RefSeq" id="NP_071731.1">
    <molecule id="Q9UNE0-1"/>
    <property type="nucleotide sequence ID" value="NM_022336.4"/>
</dbReference>
<dbReference type="RefSeq" id="XP_006712267.1">
    <molecule id="Q9UNE0-2"/>
    <property type="nucleotide sequence ID" value="XM_006712204.2"/>
</dbReference>
<dbReference type="PDB" id="7X9G">
    <property type="method" value="X-ray"/>
    <property type="resolution" value="2.80 A"/>
    <property type="chains" value="C=28-150"/>
</dbReference>
<dbReference type="PDBsum" id="7X9G"/>
<dbReference type="SMR" id="Q9UNE0"/>
<dbReference type="BioGRID" id="116118">
    <property type="interactions" value="74"/>
</dbReference>
<dbReference type="FunCoup" id="Q9UNE0">
    <property type="interactions" value="953"/>
</dbReference>
<dbReference type="IntAct" id="Q9UNE0">
    <property type="interactions" value="60"/>
</dbReference>
<dbReference type="STRING" id="9606.ENSP00000258443"/>
<dbReference type="ChEMBL" id="CHEMBL1250376"/>
<dbReference type="GlyCosmos" id="Q9UNE0">
    <property type="glycosylation" value="1 site, No reported glycans"/>
</dbReference>
<dbReference type="GlyGen" id="Q9UNE0">
    <property type="glycosylation" value="2 sites, 1 O-linked glycan (1 site)"/>
</dbReference>
<dbReference type="iPTMnet" id="Q9UNE0"/>
<dbReference type="PhosphoSitePlus" id="Q9UNE0"/>
<dbReference type="BioMuta" id="EDAR"/>
<dbReference type="DMDM" id="21263572"/>
<dbReference type="jPOST" id="Q9UNE0"/>
<dbReference type="MassIVE" id="Q9UNE0"/>
<dbReference type="PaxDb" id="9606-ENSP00000258443"/>
<dbReference type="PeptideAtlas" id="Q9UNE0"/>
<dbReference type="ProteomicsDB" id="19402"/>
<dbReference type="ProteomicsDB" id="85279">
    <molecule id="Q9UNE0-1"/>
</dbReference>
<dbReference type="ABCD" id="Q9UNE0">
    <property type="antibodies" value="14 sequenced antibodies"/>
</dbReference>
<dbReference type="Antibodypedia" id="33144">
    <property type="antibodies" value="375 antibodies from 33 providers"/>
</dbReference>
<dbReference type="DNASU" id="10913"/>
<dbReference type="Ensembl" id="ENST00000258443.7">
    <molecule id="Q9UNE0-1"/>
    <property type="protein sequence ID" value="ENSP00000258443.2"/>
    <property type="gene ID" value="ENSG00000135960.10"/>
</dbReference>
<dbReference type="Ensembl" id="ENST00000376651.1">
    <molecule id="Q9UNE0-2"/>
    <property type="protein sequence ID" value="ENSP00000365839.1"/>
    <property type="gene ID" value="ENSG00000135960.10"/>
</dbReference>
<dbReference type="Ensembl" id="ENST00000409271.5">
    <molecule id="Q9UNE0-2"/>
    <property type="protein sequence ID" value="ENSP00000386371.1"/>
    <property type="gene ID" value="ENSG00000135960.10"/>
</dbReference>
<dbReference type="GeneID" id="10913"/>
<dbReference type="KEGG" id="hsa:10913"/>
<dbReference type="MANE-Select" id="ENST00000258443.7">
    <property type="protein sequence ID" value="ENSP00000258443.2"/>
    <property type="RefSeq nucleotide sequence ID" value="NM_022336.4"/>
    <property type="RefSeq protein sequence ID" value="NP_071731.1"/>
</dbReference>
<dbReference type="UCSC" id="uc002teq.4">
    <molecule id="Q9UNE0-1"/>
    <property type="organism name" value="human"/>
</dbReference>
<dbReference type="AGR" id="HGNC:2895"/>
<dbReference type="CTD" id="10913"/>
<dbReference type="DisGeNET" id="10913"/>
<dbReference type="GeneCards" id="EDAR"/>
<dbReference type="GeneReviews" id="EDAR"/>
<dbReference type="HGNC" id="HGNC:2895">
    <property type="gene designation" value="EDAR"/>
</dbReference>
<dbReference type="HPA" id="ENSG00000135960">
    <property type="expression patterns" value="Tissue enhanced (esophagus)"/>
</dbReference>
<dbReference type="MalaCards" id="EDAR"/>
<dbReference type="MIM" id="129490">
    <property type="type" value="phenotype"/>
</dbReference>
<dbReference type="MIM" id="224900">
    <property type="type" value="phenotype"/>
</dbReference>
<dbReference type="MIM" id="604095">
    <property type="type" value="gene"/>
</dbReference>
<dbReference type="MIM" id="612630">
    <property type="type" value="phenotype"/>
</dbReference>
<dbReference type="neXtProt" id="NX_Q9UNE0"/>
<dbReference type="OpenTargets" id="ENSG00000135960"/>
<dbReference type="Orphanet" id="1810">
    <property type="disease" value="Autosomal dominant hypohidrotic ectodermal dysplasia"/>
</dbReference>
<dbReference type="Orphanet" id="248">
    <property type="disease" value="Autosomal recessive hypohidrotic ectodermal dysplasia"/>
</dbReference>
<dbReference type="PharmGKB" id="PA27602"/>
<dbReference type="VEuPathDB" id="HostDB:ENSG00000135960"/>
<dbReference type="eggNOG" id="ENOG502QRV5">
    <property type="taxonomic scope" value="Eukaryota"/>
</dbReference>
<dbReference type="GeneTree" id="ENSGT00940000153259"/>
<dbReference type="HOGENOM" id="CLU_039634_0_0_1"/>
<dbReference type="InParanoid" id="Q9UNE0"/>
<dbReference type="OMA" id="CGENEYH"/>
<dbReference type="OrthoDB" id="9903718at2759"/>
<dbReference type="PAN-GO" id="Q9UNE0">
    <property type="GO annotations" value="4 GO annotations based on evolutionary models"/>
</dbReference>
<dbReference type="PhylomeDB" id="Q9UNE0"/>
<dbReference type="TreeFam" id="TF331385"/>
<dbReference type="PathwayCommons" id="Q9UNE0"/>
<dbReference type="Reactome" id="R-HSA-5669034">
    <property type="pathway name" value="TNFs bind their physiological receptors"/>
</dbReference>
<dbReference type="SignaLink" id="Q9UNE0"/>
<dbReference type="SIGNOR" id="Q9UNE0"/>
<dbReference type="BioGRID-ORCS" id="10913">
    <property type="hits" value="98 hits in 1150 CRISPR screens"/>
</dbReference>
<dbReference type="GeneWiki" id="EDAR"/>
<dbReference type="GenomeRNAi" id="10913"/>
<dbReference type="Pharos" id="Q9UNE0">
    <property type="development level" value="Tbio"/>
</dbReference>
<dbReference type="PRO" id="PR:Q9UNE0"/>
<dbReference type="Proteomes" id="UP000005640">
    <property type="component" value="Chromosome 2"/>
</dbReference>
<dbReference type="RNAct" id="Q9UNE0">
    <property type="molecule type" value="protein"/>
</dbReference>
<dbReference type="Bgee" id="ENSG00000135960">
    <property type="expression patterns" value="Expressed in secondary oocyte and 78 other cell types or tissues"/>
</dbReference>
<dbReference type="GO" id="GO:0045177">
    <property type="term" value="C:apical part of cell"/>
    <property type="evidence" value="ECO:0007669"/>
    <property type="project" value="Ensembl"/>
</dbReference>
<dbReference type="GO" id="GO:0016020">
    <property type="term" value="C:membrane"/>
    <property type="evidence" value="ECO:0000303"/>
    <property type="project" value="UniProtKB"/>
</dbReference>
<dbReference type="GO" id="GO:0005886">
    <property type="term" value="C:plasma membrane"/>
    <property type="evidence" value="ECO:0000318"/>
    <property type="project" value="GO_Central"/>
</dbReference>
<dbReference type="GO" id="GO:0038023">
    <property type="term" value="F:signaling receptor activity"/>
    <property type="evidence" value="ECO:0000318"/>
    <property type="project" value="GO_Central"/>
</dbReference>
<dbReference type="GO" id="GO:0004888">
    <property type="term" value="F:transmembrane signaling receptor activity"/>
    <property type="evidence" value="ECO:0000314"/>
    <property type="project" value="HGNC-UCL"/>
</dbReference>
<dbReference type="GO" id="GO:0006915">
    <property type="term" value="P:apoptotic process"/>
    <property type="evidence" value="ECO:0007669"/>
    <property type="project" value="UniProtKB-KW"/>
</dbReference>
<dbReference type="GO" id="GO:0030154">
    <property type="term" value="P:cell differentiation"/>
    <property type="evidence" value="ECO:0007669"/>
    <property type="project" value="UniProtKB-KW"/>
</dbReference>
<dbReference type="GO" id="GO:0019221">
    <property type="term" value="P:cytokine-mediated signaling pathway"/>
    <property type="evidence" value="ECO:0000314"/>
    <property type="project" value="ARUK-UCL"/>
</dbReference>
<dbReference type="GO" id="GO:0008544">
    <property type="term" value="P:epidermis development"/>
    <property type="evidence" value="ECO:0000304"/>
    <property type="project" value="HGNC-UCL"/>
</dbReference>
<dbReference type="GO" id="GO:0001942">
    <property type="term" value="P:hair follicle development"/>
    <property type="evidence" value="ECO:0007669"/>
    <property type="project" value="Ensembl"/>
</dbReference>
<dbReference type="GO" id="GO:0042475">
    <property type="term" value="P:odontogenesis of dentin-containing tooth"/>
    <property type="evidence" value="ECO:0007669"/>
    <property type="project" value="Ensembl"/>
</dbReference>
<dbReference type="GO" id="GO:0043473">
    <property type="term" value="P:pigmentation"/>
    <property type="evidence" value="ECO:0007669"/>
    <property type="project" value="Ensembl"/>
</dbReference>
<dbReference type="GO" id="GO:0043123">
    <property type="term" value="P:positive regulation of canonical NF-kappaB signal transduction"/>
    <property type="evidence" value="ECO:0000318"/>
    <property type="project" value="GO_Central"/>
</dbReference>
<dbReference type="GO" id="GO:0010628">
    <property type="term" value="P:positive regulation of gene expression"/>
    <property type="evidence" value="ECO:0007669"/>
    <property type="project" value="Ensembl"/>
</dbReference>
<dbReference type="GO" id="GO:0046330">
    <property type="term" value="P:positive regulation of JNK cascade"/>
    <property type="evidence" value="ECO:0000318"/>
    <property type="project" value="GO_Central"/>
</dbReference>
<dbReference type="GO" id="GO:1901224">
    <property type="term" value="P:positive regulation of non-canonical NF-kappaB signal transduction"/>
    <property type="evidence" value="ECO:0007669"/>
    <property type="project" value="Ensembl"/>
</dbReference>
<dbReference type="GO" id="GO:0060662">
    <property type="term" value="P:salivary gland cavitation"/>
    <property type="evidence" value="ECO:0007669"/>
    <property type="project" value="Ensembl"/>
</dbReference>
<dbReference type="CDD" id="cd13421">
    <property type="entry name" value="TNFRSF_EDAR"/>
    <property type="match status" value="1"/>
</dbReference>
<dbReference type="FunFam" id="2.10.50.10:FF:000023">
    <property type="entry name" value="Ectodysplasin A receptor"/>
    <property type="match status" value="1"/>
</dbReference>
<dbReference type="FunFam" id="1.10.533.10:FF:000006">
    <property type="entry name" value="Tumor necrosis factor receptor superfamily member EDAR"/>
    <property type="match status" value="1"/>
</dbReference>
<dbReference type="Gene3D" id="1.10.533.10">
    <property type="entry name" value="Death Domain, Fas"/>
    <property type="match status" value="1"/>
</dbReference>
<dbReference type="Gene3D" id="2.10.50.10">
    <property type="entry name" value="Tumor Necrosis Factor Receptor, subunit A, domain 2"/>
    <property type="match status" value="1"/>
</dbReference>
<dbReference type="InterPro" id="IPR011029">
    <property type="entry name" value="DEATH-like_dom_sf"/>
</dbReference>
<dbReference type="InterPro" id="IPR056762">
    <property type="entry name" value="Death_EDAR"/>
</dbReference>
<dbReference type="InterPro" id="IPR034052">
    <property type="entry name" value="EDAR_N"/>
</dbReference>
<dbReference type="InterPro" id="IPR047526">
    <property type="entry name" value="TNR19/27/EDAR"/>
</dbReference>
<dbReference type="PANTHER" id="PTHR12120">
    <property type="entry name" value="TNFR-CYS DOMAIN-CONTAINING PROTEIN"/>
    <property type="match status" value="1"/>
</dbReference>
<dbReference type="PANTHER" id="PTHR12120:SF9">
    <property type="entry name" value="TUMOR NECROSIS FACTOR RECEPTOR SUPERFAMILY MEMBER EDAR"/>
    <property type="match status" value="1"/>
</dbReference>
<dbReference type="Pfam" id="PF24979">
    <property type="entry name" value="Death_EDAR"/>
    <property type="match status" value="1"/>
</dbReference>
<dbReference type="SUPFAM" id="SSF47986">
    <property type="entry name" value="DEATH domain"/>
    <property type="match status" value="1"/>
</dbReference>
<accession>Q9UNE0</accession>
<accession>B2R9H2</accession>
<accession>B4DLC5</accession>
<accession>D3DX74</accession>
<accession>E9PC98</accession>
<accession>Q52LL5</accession>
<accession>Q9UND9</accession>
<name>EDAR_HUMAN</name>
<protein>
    <recommendedName>
        <fullName>Tumor necrosis factor receptor superfamily member EDAR</fullName>
    </recommendedName>
    <alternativeName>
        <fullName>Anhidrotic ectodysplasin receptor 1</fullName>
    </alternativeName>
    <alternativeName>
        <fullName>Downless homolog</fullName>
    </alternativeName>
    <alternativeName>
        <fullName>EDA-A1 receptor</fullName>
    </alternativeName>
    <alternativeName>
        <fullName>Ectodermal dysplasia receptor</fullName>
    </alternativeName>
    <alternativeName>
        <fullName>Ectodysplasin-A receptor</fullName>
    </alternativeName>
</protein>
<comment type="function">
    <text>Receptor for EDA isoform A1, but not for EDA isoform A2. Mediates the activation of NF-kappa-B and JNK. May promote caspase-independent cell death.</text>
</comment>
<comment type="subunit">
    <text>Binds to EDARADD. Associates with TRAF1, TRAF2, TRAF3 and NIK.</text>
</comment>
<comment type="interaction">
    <interactant intactId="EBI-12964110">
        <id>Q9UNE0-2</id>
    </interactant>
    <interactant intactId="EBI-347996">
        <id>O43765</id>
        <label>SGTA</label>
    </interactant>
    <organismsDiffer>false</organismsDiffer>
    <experiments>3</experiments>
</comment>
<comment type="interaction">
    <interactant intactId="EBI-12964110">
        <id>Q9UNE0-2</id>
    </interactant>
    <interactant intactId="EBI-12237619">
        <id>O75841</id>
        <label>UPK1B</label>
    </interactant>
    <organismsDiffer>false</organismsDiffer>
    <experiments>3</experiments>
</comment>
<comment type="subcellular location">
    <subcellularLocation>
        <location evidence="18">Membrane</location>
        <topology evidence="18">Single-pass type I membrane protein</topology>
    </subcellularLocation>
</comment>
<comment type="alternative products">
    <event type="alternative splicing"/>
    <isoform>
        <id>Q9UNE0-1</id>
        <name>1</name>
        <sequence type="displayed"/>
    </isoform>
    <isoform>
        <id>Q9UNE0-2</id>
        <name>2</name>
        <sequence type="described" ref="VSP_054187"/>
    </isoform>
</comment>
<comment type="tissue specificity">
    <text>Detected in fetal kidney, lung, skin and cultured neonatal epidermal keratinocytes. Not detected in lymphoblast and fibroblast cell lines.</text>
</comment>
<comment type="developmental stage">
    <text>Found in craniofacial tissues from embryonic day 42-53. Expressed in fetal skin 11 and 15 weeks after gestation.</text>
</comment>
<comment type="polymorphism">
    <text>Genetic variation in EDAR is associated with variations in head hair thickness and defines the hair morphology locus 1 (HRM1) [MIM:612630]. Besides skin color and facial features, hair morphology is one of the most distinctive traits among human populations, and classical classification of human population is based on such visible traits.</text>
</comment>
<comment type="disease" evidence="4 12">
    <disease id="DI-00432">
        <name>Ectodermal dysplasia 10A, hypohidrotic/hair/nail type, autosomal dominant</name>
        <acronym>ECTD10A</acronym>
        <description>A form of ectodermal dysplasia, a heterogeneous group of disorders due to abnormal development of two or more ectodermal structures. It is an autosomal dominant condition characterized by hypotrichosis, abnormal or missing teeth, and hypohidrosis due to the absence of sweat glands.</description>
        <dbReference type="MIM" id="129490"/>
    </disease>
    <text>The disease is caused by variants affecting the gene represented in this entry.</text>
</comment>
<comment type="disease" evidence="4 8 9 10 12 14 15 16">
    <disease id="DI-00422">
        <name>Ectodermal dysplasia 10B, hypohidrotic/hair/tooth type, autosomal recessive</name>
        <acronym>ECTD10B</acronym>
        <description>A disorder due to abnormal development of two or more ectodermal structures, and characterized by sparse hair (atrichosis or hypotrichosis), abnormal or missing teeth and the inability to sweat due to the absence of sweat glands.</description>
        <dbReference type="MIM" id="224900"/>
    </disease>
    <text>The disease is caused by variants affecting the gene represented in this entry.</text>
</comment>
<evidence type="ECO:0000250" key="1"/>
<evidence type="ECO:0000255" key="2"/>
<evidence type="ECO:0000256" key="3">
    <source>
        <dbReference type="SAM" id="MobiDB-lite"/>
    </source>
</evidence>
<evidence type="ECO:0000269" key="4">
    <source>
    </source>
</evidence>
<evidence type="ECO:0000269" key="5">
    <source>
    </source>
</evidence>
<evidence type="ECO:0000269" key="6">
    <source>
    </source>
</evidence>
<evidence type="ECO:0000269" key="7">
    <source>
    </source>
</evidence>
<evidence type="ECO:0000269" key="8">
    <source>
    </source>
</evidence>
<evidence type="ECO:0000269" key="9">
    <source>
    </source>
</evidence>
<evidence type="ECO:0000269" key="10">
    <source>
    </source>
</evidence>
<evidence type="ECO:0000269" key="11">
    <source>
    </source>
</evidence>
<evidence type="ECO:0000269" key="12">
    <source>
    </source>
</evidence>
<evidence type="ECO:0000269" key="13">
    <source>
    </source>
</evidence>
<evidence type="ECO:0000269" key="14">
    <source>
    </source>
</evidence>
<evidence type="ECO:0000269" key="15">
    <source>
    </source>
</evidence>
<evidence type="ECO:0000269" key="16">
    <source>
    </source>
</evidence>
<evidence type="ECO:0000303" key="17">
    <source>
    </source>
</evidence>
<evidence type="ECO:0000305" key="18"/>
<evidence type="ECO:0007829" key="19">
    <source>
        <dbReference type="PDB" id="7X9G"/>
    </source>
</evidence>
<sequence>MAHVGDCTQTPWLPVLVVSLMCSARAEYSNCGENEYYNQTTGLCQECPPCGPGEEPYLSCGYGTKDEDYGCVPCPAEKFSKGGYQICRRHKDCEGFFRATVLTPGDMENDAECGPCLPGYYMLENRPRNIYGMVCYSCLLAPPNTKECVGATSGASANFPGTSGSSTLSPFQHAHKELSGQGHLATALIIAMSTIFIMAIAIVLIIMFYILKTKPSAPACCTSHPGKSVEAQVSKDEEKKEAPDNVVMFSEKDEFEKLTATPAKPTKSENDASSENEQLLSRSVDSDEEPAPDKQGSPELCLLSLVHLAREKSATSNKSAGIQSRRKKILDVYANVCGVVEGLSPTELPFDCLEKTSRMLSSTYNSEKAVVKTWRHLAESFGLKRDEIGGMTDGMQLFDRISTAGYSIPELLTKLVQIERLDAVESLCADILEWAGVVPPASQPHAAS</sequence>